<gene>
    <name evidence="1" type="primary">ilvC</name>
    <name type="ordered locus">Sama_3282</name>
</gene>
<comment type="function">
    <text evidence="1">Involved in the biosynthesis of branched-chain amino acids (BCAA). Catalyzes an alkyl-migration followed by a ketol-acid reduction of (S)-2-acetolactate (S2AL) to yield (R)-2,3-dihydroxy-isovalerate. In the isomerase reaction, S2AL is rearranged via a Mg-dependent methyl migration to produce 3-hydroxy-3-methyl-2-ketobutyrate (HMKB). In the reductase reaction, this 2-ketoacid undergoes a metal-dependent reduction by NADPH to yield (R)-2,3-dihydroxy-isovalerate.</text>
</comment>
<comment type="catalytic activity">
    <reaction evidence="1">
        <text>(2R)-2,3-dihydroxy-3-methylbutanoate + NADP(+) = (2S)-2-acetolactate + NADPH + H(+)</text>
        <dbReference type="Rhea" id="RHEA:22068"/>
        <dbReference type="ChEBI" id="CHEBI:15378"/>
        <dbReference type="ChEBI" id="CHEBI:49072"/>
        <dbReference type="ChEBI" id="CHEBI:57783"/>
        <dbReference type="ChEBI" id="CHEBI:58349"/>
        <dbReference type="ChEBI" id="CHEBI:58476"/>
        <dbReference type="EC" id="1.1.1.86"/>
    </reaction>
</comment>
<comment type="catalytic activity">
    <reaction evidence="1">
        <text>(2R,3R)-2,3-dihydroxy-3-methylpentanoate + NADP(+) = (S)-2-ethyl-2-hydroxy-3-oxobutanoate + NADPH + H(+)</text>
        <dbReference type="Rhea" id="RHEA:13493"/>
        <dbReference type="ChEBI" id="CHEBI:15378"/>
        <dbReference type="ChEBI" id="CHEBI:49256"/>
        <dbReference type="ChEBI" id="CHEBI:49258"/>
        <dbReference type="ChEBI" id="CHEBI:57783"/>
        <dbReference type="ChEBI" id="CHEBI:58349"/>
        <dbReference type="EC" id="1.1.1.86"/>
    </reaction>
</comment>
<comment type="cofactor">
    <cofactor evidence="1">
        <name>Mg(2+)</name>
        <dbReference type="ChEBI" id="CHEBI:18420"/>
    </cofactor>
    <text evidence="1">Binds 2 magnesium ions per subunit.</text>
</comment>
<comment type="pathway">
    <text evidence="1">Amino-acid biosynthesis; L-isoleucine biosynthesis; L-isoleucine from 2-oxobutanoate: step 2/4.</text>
</comment>
<comment type="pathway">
    <text evidence="1">Amino-acid biosynthesis; L-valine biosynthesis; L-valine from pyruvate: step 2/4.</text>
</comment>
<comment type="similarity">
    <text evidence="1">Belongs to the ketol-acid reductoisomerase family.</text>
</comment>
<organism>
    <name type="scientific">Shewanella amazonensis (strain ATCC BAA-1098 / SB2B)</name>
    <dbReference type="NCBI Taxonomy" id="326297"/>
    <lineage>
        <taxon>Bacteria</taxon>
        <taxon>Pseudomonadati</taxon>
        <taxon>Pseudomonadota</taxon>
        <taxon>Gammaproteobacteria</taxon>
        <taxon>Alteromonadales</taxon>
        <taxon>Shewanellaceae</taxon>
        <taxon>Shewanella</taxon>
    </lineage>
</organism>
<evidence type="ECO:0000255" key="1">
    <source>
        <dbReference type="HAMAP-Rule" id="MF_00435"/>
    </source>
</evidence>
<evidence type="ECO:0000255" key="2">
    <source>
        <dbReference type="PROSITE-ProRule" id="PRU01197"/>
    </source>
</evidence>
<evidence type="ECO:0000255" key="3">
    <source>
        <dbReference type="PROSITE-ProRule" id="PRU01198"/>
    </source>
</evidence>
<sequence length="493" mass="54431">MANYFNSLNLRQQLAQLSQCRFMDRSEFENGCDYIKGWNIVILGCGAQGLNQGLNMRDSGLNISYALRAEAIAEKRASWKKATDNGFTVGTFEELIPQADLVLNLTPDKQHSNVVNTVMPLMKQGATLSYSHGFNIVEEGMQVRPDITVIMVAPKCPGTEVREEYKRGFGVPTLIAVHPENDPRGDGLEIAKAYASATGGDRAGVLHSSFIAEVKSDLMGEQTILCGMLQTSAILGYEKMVADGVEPGYAAKLIQQGLETITEALKQGGITNMMDRLSNPAKIKAFDMAEELKGILAPLFEKHMDDIISGEFSRTMMADWANDDANLLRWRAETNETAFENAPSSNEHIDEQTYFDKGIFLVAMIKAGVELAFDTMVDAGIIEESAYYESLHETPLIANTIARKRLYEMNVVISDTAEYGCYLFNHAAVPLLRDYVKSMSAEYLGGGLKDSSNAVDNVRLIEVNQAIRNTAVEFIGEELRGYMKDMKRISAAQ</sequence>
<accession>A1SAS8</accession>
<proteinExistence type="inferred from homology"/>
<reference key="1">
    <citation type="submission" date="2006-12" db="EMBL/GenBank/DDBJ databases">
        <title>Complete sequence of Shewanella amazonensis SB2B.</title>
        <authorList>
            <consortium name="US DOE Joint Genome Institute"/>
            <person name="Copeland A."/>
            <person name="Lucas S."/>
            <person name="Lapidus A."/>
            <person name="Barry K."/>
            <person name="Detter J.C."/>
            <person name="Glavina del Rio T."/>
            <person name="Hammon N."/>
            <person name="Israni S."/>
            <person name="Dalin E."/>
            <person name="Tice H."/>
            <person name="Pitluck S."/>
            <person name="Munk A.C."/>
            <person name="Brettin T."/>
            <person name="Bruce D."/>
            <person name="Han C."/>
            <person name="Tapia R."/>
            <person name="Gilna P."/>
            <person name="Schmutz J."/>
            <person name="Larimer F."/>
            <person name="Land M."/>
            <person name="Hauser L."/>
            <person name="Kyrpides N."/>
            <person name="Mikhailova N."/>
            <person name="Fredrickson J."/>
            <person name="Richardson P."/>
        </authorList>
    </citation>
    <scope>NUCLEOTIDE SEQUENCE [LARGE SCALE GENOMIC DNA]</scope>
    <source>
        <strain>ATCC BAA-1098 / SB2B</strain>
    </source>
</reference>
<keyword id="KW-0028">Amino-acid biosynthesis</keyword>
<keyword id="KW-0100">Branched-chain amino acid biosynthesis</keyword>
<keyword id="KW-0460">Magnesium</keyword>
<keyword id="KW-0479">Metal-binding</keyword>
<keyword id="KW-0521">NADP</keyword>
<keyword id="KW-0560">Oxidoreductase</keyword>
<keyword id="KW-1185">Reference proteome</keyword>
<keyword id="KW-0677">Repeat</keyword>
<dbReference type="EC" id="1.1.1.86" evidence="1"/>
<dbReference type="EMBL" id="CP000507">
    <property type="protein sequence ID" value="ABM01485.1"/>
    <property type="molecule type" value="Genomic_DNA"/>
</dbReference>
<dbReference type="RefSeq" id="WP_011761389.1">
    <property type="nucleotide sequence ID" value="NC_008700.1"/>
</dbReference>
<dbReference type="SMR" id="A1SAS8"/>
<dbReference type="STRING" id="326297.Sama_3282"/>
<dbReference type="KEGG" id="saz:Sama_3282"/>
<dbReference type="eggNOG" id="COG0059">
    <property type="taxonomic scope" value="Bacteria"/>
</dbReference>
<dbReference type="HOGENOM" id="CLU_551905_0_0_6"/>
<dbReference type="OrthoDB" id="9804088at2"/>
<dbReference type="UniPathway" id="UPA00047">
    <property type="reaction ID" value="UER00056"/>
</dbReference>
<dbReference type="UniPathway" id="UPA00049">
    <property type="reaction ID" value="UER00060"/>
</dbReference>
<dbReference type="Proteomes" id="UP000009175">
    <property type="component" value="Chromosome"/>
</dbReference>
<dbReference type="GO" id="GO:0005829">
    <property type="term" value="C:cytosol"/>
    <property type="evidence" value="ECO:0007669"/>
    <property type="project" value="TreeGrafter"/>
</dbReference>
<dbReference type="GO" id="GO:0004455">
    <property type="term" value="F:ketol-acid reductoisomerase activity"/>
    <property type="evidence" value="ECO:0007669"/>
    <property type="project" value="UniProtKB-UniRule"/>
</dbReference>
<dbReference type="GO" id="GO:0000287">
    <property type="term" value="F:magnesium ion binding"/>
    <property type="evidence" value="ECO:0007669"/>
    <property type="project" value="UniProtKB-UniRule"/>
</dbReference>
<dbReference type="GO" id="GO:0009097">
    <property type="term" value="P:isoleucine biosynthetic process"/>
    <property type="evidence" value="ECO:0007669"/>
    <property type="project" value="UniProtKB-UniRule"/>
</dbReference>
<dbReference type="GO" id="GO:0009099">
    <property type="term" value="P:L-valine biosynthetic process"/>
    <property type="evidence" value="ECO:0007669"/>
    <property type="project" value="UniProtKB-UniRule"/>
</dbReference>
<dbReference type="FunFam" id="3.40.50.720:FF:000043">
    <property type="entry name" value="Ketol-acid reductoisomerase (NADP(+))"/>
    <property type="match status" value="1"/>
</dbReference>
<dbReference type="Gene3D" id="1.10.1040.10">
    <property type="entry name" value="N-(1-d-carboxylethyl)-l-norvaline Dehydrogenase, domain 2"/>
    <property type="match status" value="1"/>
</dbReference>
<dbReference type="Gene3D" id="3.40.50.720">
    <property type="entry name" value="NAD(P)-binding Rossmann-like Domain"/>
    <property type="match status" value="1"/>
</dbReference>
<dbReference type="HAMAP" id="MF_00435">
    <property type="entry name" value="IlvC"/>
    <property type="match status" value="1"/>
</dbReference>
<dbReference type="InterPro" id="IPR008927">
    <property type="entry name" value="6-PGluconate_DH-like_C_sf"/>
</dbReference>
<dbReference type="InterPro" id="IPR013328">
    <property type="entry name" value="6PGD_dom2"/>
</dbReference>
<dbReference type="InterPro" id="IPR013023">
    <property type="entry name" value="KARI"/>
</dbReference>
<dbReference type="InterPro" id="IPR000506">
    <property type="entry name" value="KARI_C"/>
</dbReference>
<dbReference type="InterPro" id="IPR013116">
    <property type="entry name" value="KARI_N"/>
</dbReference>
<dbReference type="InterPro" id="IPR036291">
    <property type="entry name" value="NAD(P)-bd_dom_sf"/>
</dbReference>
<dbReference type="NCBIfam" id="TIGR00465">
    <property type="entry name" value="ilvC"/>
    <property type="match status" value="1"/>
</dbReference>
<dbReference type="NCBIfam" id="NF003557">
    <property type="entry name" value="PRK05225.1"/>
    <property type="match status" value="1"/>
</dbReference>
<dbReference type="PANTHER" id="PTHR21371">
    <property type="entry name" value="KETOL-ACID REDUCTOISOMERASE, MITOCHONDRIAL"/>
    <property type="match status" value="1"/>
</dbReference>
<dbReference type="PANTHER" id="PTHR21371:SF1">
    <property type="entry name" value="KETOL-ACID REDUCTOISOMERASE, MITOCHONDRIAL"/>
    <property type="match status" value="1"/>
</dbReference>
<dbReference type="Pfam" id="PF01450">
    <property type="entry name" value="KARI_C"/>
    <property type="match status" value="2"/>
</dbReference>
<dbReference type="Pfam" id="PF07991">
    <property type="entry name" value="KARI_N"/>
    <property type="match status" value="1"/>
</dbReference>
<dbReference type="SUPFAM" id="SSF48179">
    <property type="entry name" value="6-phosphogluconate dehydrogenase C-terminal domain-like"/>
    <property type="match status" value="2"/>
</dbReference>
<dbReference type="SUPFAM" id="SSF51735">
    <property type="entry name" value="NAD(P)-binding Rossmann-fold domains"/>
    <property type="match status" value="1"/>
</dbReference>
<dbReference type="PROSITE" id="PS51851">
    <property type="entry name" value="KARI_C"/>
    <property type="match status" value="2"/>
</dbReference>
<dbReference type="PROSITE" id="PS51850">
    <property type="entry name" value="KARI_N"/>
    <property type="match status" value="1"/>
</dbReference>
<feature type="chain" id="PRO_1000190993" description="Ketol-acid reductoisomerase (NADP(+))">
    <location>
        <begin position="1"/>
        <end position="493"/>
    </location>
</feature>
<feature type="domain" description="KARI N-terminal Rossmann" evidence="2">
    <location>
        <begin position="17"/>
        <end position="208"/>
    </location>
</feature>
<feature type="domain" description="KARI C-terminal knotted 1" evidence="3">
    <location>
        <begin position="209"/>
        <end position="344"/>
    </location>
</feature>
<feature type="domain" description="KARI C-terminal knotted 2" evidence="3">
    <location>
        <begin position="345"/>
        <end position="486"/>
    </location>
</feature>
<feature type="active site" evidence="1">
    <location>
        <position position="132"/>
    </location>
</feature>
<feature type="binding site" evidence="1">
    <location>
        <begin position="45"/>
        <end position="48"/>
    </location>
    <ligand>
        <name>NADP(+)</name>
        <dbReference type="ChEBI" id="CHEBI:58349"/>
    </ligand>
</feature>
<feature type="binding site" evidence="1">
    <location>
        <position position="68"/>
    </location>
    <ligand>
        <name>NADP(+)</name>
        <dbReference type="ChEBI" id="CHEBI:58349"/>
    </ligand>
</feature>
<feature type="binding site" evidence="1">
    <location>
        <position position="76"/>
    </location>
    <ligand>
        <name>NADP(+)</name>
        <dbReference type="ChEBI" id="CHEBI:58349"/>
    </ligand>
</feature>
<feature type="binding site" evidence="1">
    <location>
        <position position="78"/>
    </location>
    <ligand>
        <name>NADP(+)</name>
        <dbReference type="ChEBI" id="CHEBI:58349"/>
    </ligand>
</feature>
<feature type="binding site" evidence="1">
    <location>
        <begin position="108"/>
        <end position="110"/>
    </location>
    <ligand>
        <name>NADP(+)</name>
        <dbReference type="ChEBI" id="CHEBI:58349"/>
    </ligand>
</feature>
<feature type="binding site" evidence="1">
    <location>
        <position position="158"/>
    </location>
    <ligand>
        <name>NADP(+)</name>
        <dbReference type="ChEBI" id="CHEBI:58349"/>
    </ligand>
</feature>
<feature type="binding site" evidence="1">
    <location>
        <position position="217"/>
    </location>
    <ligand>
        <name>Mg(2+)</name>
        <dbReference type="ChEBI" id="CHEBI:18420"/>
        <label>1</label>
    </ligand>
</feature>
<feature type="binding site" evidence="1">
    <location>
        <position position="217"/>
    </location>
    <ligand>
        <name>Mg(2+)</name>
        <dbReference type="ChEBI" id="CHEBI:18420"/>
        <label>2</label>
    </ligand>
</feature>
<feature type="binding site" evidence="1">
    <location>
        <position position="221"/>
    </location>
    <ligand>
        <name>Mg(2+)</name>
        <dbReference type="ChEBI" id="CHEBI:18420"/>
        <label>1</label>
    </ligand>
</feature>
<feature type="binding site" evidence="1">
    <location>
        <position position="389"/>
    </location>
    <ligand>
        <name>Mg(2+)</name>
        <dbReference type="ChEBI" id="CHEBI:18420"/>
        <label>2</label>
    </ligand>
</feature>
<feature type="binding site" evidence="1">
    <location>
        <position position="393"/>
    </location>
    <ligand>
        <name>Mg(2+)</name>
        <dbReference type="ChEBI" id="CHEBI:18420"/>
        <label>2</label>
    </ligand>
</feature>
<feature type="binding site" evidence="1">
    <location>
        <position position="414"/>
    </location>
    <ligand>
        <name>substrate</name>
    </ligand>
</feature>
<protein>
    <recommendedName>
        <fullName evidence="1">Ketol-acid reductoisomerase (NADP(+))</fullName>
        <shortName evidence="1">KARI</shortName>
        <ecNumber evidence="1">1.1.1.86</ecNumber>
    </recommendedName>
    <alternativeName>
        <fullName evidence="1">Acetohydroxy-acid isomeroreductase</fullName>
        <shortName evidence="1">AHIR</shortName>
    </alternativeName>
    <alternativeName>
        <fullName evidence="1">Alpha-keto-beta-hydroxylacyl reductoisomerase</fullName>
    </alternativeName>
    <alternativeName>
        <fullName evidence="1">Ketol-acid reductoisomerase type 2</fullName>
    </alternativeName>
    <alternativeName>
        <fullName evidence="1">Ketol-acid reductoisomerase type II</fullName>
    </alternativeName>
</protein>
<name>ILVC_SHEAM</name>